<protein>
    <recommendedName>
        <fullName evidence="1">Glutamate--tRNA ligase</fullName>
        <ecNumber evidence="1">6.1.1.17</ecNumber>
    </recommendedName>
    <alternativeName>
        <fullName evidence="1">Glutamyl-tRNA synthetase</fullName>
        <shortName evidence="1">GluRS</shortName>
    </alternativeName>
</protein>
<evidence type="ECO:0000255" key="1">
    <source>
        <dbReference type="HAMAP-Rule" id="MF_00022"/>
    </source>
</evidence>
<accession>Q2P5M8</accession>
<gene>
    <name evidence="1" type="primary">gltX</name>
    <name type="ordered locus">XOO1394</name>
</gene>
<dbReference type="EC" id="6.1.1.17" evidence="1"/>
<dbReference type="EMBL" id="AP008229">
    <property type="protein sequence ID" value="BAE68149.1"/>
    <property type="molecule type" value="Genomic_DNA"/>
</dbReference>
<dbReference type="RefSeq" id="WP_011258289.1">
    <property type="nucleotide sequence ID" value="NC_007705.1"/>
</dbReference>
<dbReference type="SMR" id="Q2P5M8"/>
<dbReference type="KEGG" id="xom:XOO1394"/>
<dbReference type="HOGENOM" id="CLU_015768_6_3_6"/>
<dbReference type="GO" id="GO:0005829">
    <property type="term" value="C:cytosol"/>
    <property type="evidence" value="ECO:0007669"/>
    <property type="project" value="TreeGrafter"/>
</dbReference>
<dbReference type="GO" id="GO:0005524">
    <property type="term" value="F:ATP binding"/>
    <property type="evidence" value="ECO:0007669"/>
    <property type="project" value="UniProtKB-UniRule"/>
</dbReference>
<dbReference type="GO" id="GO:0004818">
    <property type="term" value="F:glutamate-tRNA ligase activity"/>
    <property type="evidence" value="ECO:0007669"/>
    <property type="project" value="UniProtKB-UniRule"/>
</dbReference>
<dbReference type="GO" id="GO:0000049">
    <property type="term" value="F:tRNA binding"/>
    <property type="evidence" value="ECO:0007669"/>
    <property type="project" value="InterPro"/>
</dbReference>
<dbReference type="GO" id="GO:0008270">
    <property type="term" value="F:zinc ion binding"/>
    <property type="evidence" value="ECO:0007669"/>
    <property type="project" value="InterPro"/>
</dbReference>
<dbReference type="GO" id="GO:0006424">
    <property type="term" value="P:glutamyl-tRNA aminoacylation"/>
    <property type="evidence" value="ECO:0007669"/>
    <property type="project" value="UniProtKB-UniRule"/>
</dbReference>
<dbReference type="CDD" id="cd00808">
    <property type="entry name" value="GluRS_core"/>
    <property type="match status" value="1"/>
</dbReference>
<dbReference type="FunFam" id="3.40.50.620:FF:000007">
    <property type="entry name" value="Glutamate--tRNA ligase"/>
    <property type="match status" value="1"/>
</dbReference>
<dbReference type="Gene3D" id="1.10.10.350">
    <property type="match status" value="1"/>
</dbReference>
<dbReference type="Gene3D" id="3.40.50.620">
    <property type="entry name" value="HUPs"/>
    <property type="match status" value="1"/>
</dbReference>
<dbReference type="HAMAP" id="MF_00022">
    <property type="entry name" value="Glu_tRNA_synth_type1"/>
    <property type="match status" value="1"/>
</dbReference>
<dbReference type="InterPro" id="IPR045462">
    <property type="entry name" value="aa-tRNA-synth_I_cd-bd"/>
</dbReference>
<dbReference type="InterPro" id="IPR020751">
    <property type="entry name" value="aa-tRNA-synth_I_codon-bd_sub2"/>
</dbReference>
<dbReference type="InterPro" id="IPR001412">
    <property type="entry name" value="aa-tRNA-synth_I_CS"/>
</dbReference>
<dbReference type="InterPro" id="IPR008925">
    <property type="entry name" value="aa_tRNA-synth_I_cd-bd_sf"/>
</dbReference>
<dbReference type="InterPro" id="IPR004527">
    <property type="entry name" value="Glu-tRNA-ligase_bac/mito"/>
</dbReference>
<dbReference type="InterPro" id="IPR000924">
    <property type="entry name" value="Glu/Gln-tRNA-synth"/>
</dbReference>
<dbReference type="InterPro" id="IPR020058">
    <property type="entry name" value="Glu/Gln-tRNA-synth_Ib_cat-dom"/>
</dbReference>
<dbReference type="InterPro" id="IPR049940">
    <property type="entry name" value="GluQ/Sye"/>
</dbReference>
<dbReference type="InterPro" id="IPR033910">
    <property type="entry name" value="GluRS_core"/>
</dbReference>
<dbReference type="InterPro" id="IPR014729">
    <property type="entry name" value="Rossmann-like_a/b/a_fold"/>
</dbReference>
<dbReference type="NCBIfam" id="TIGR00464">
    <property type="entry name" value="gltX_bact"/>
    <property type="match status" value="1"/>
</dbReference>
<dbReference type="PANTHER" id="PTHR43311">
    <property type="entry name" value="GLUTAMATE--TRNA LIGASE"/>
    <property type="match status" value="1"/>
</dbReference>
<dbReference type="PANTHER" id="PTHR43311:SF2">
    <property type="entry name" value="GLUTAMATE--TRNA LIGASE, MITOCHONDRIAL-RELATED"/>
    <property type="match status" value="1"/>
</dbReference>
<dbReference type="Pfam" id="PF19269">
    <property type="entry name" value="Anticodon_2"/>
    <property type="match status" value="1"/>
</dbReference>
<dbReference type="Pfam" id="PF00749">
    <property type="entry name" value="tRNA-synt_1c"/>
    <property type="match status" value="1"/>
</dbReference>
<dbReference type="PRINTS" id="PR00987">
    <property type="entry name" value="TRNASYNTHGLU"/>
</dbReference>
<dbReference type="SUPFAM" id="SSF48163">
    <property type="entry name" value="An anticodon-binding domain of class I aminoacyl-tRNA synthetases"/>
    <property type="match status" value="1"/>
</dbReference>
<dbReference type="SUPFAM" id="SSF52374">
    <property type="entry name" value="Nucleotidylyl transferase"/>
    <property type="match status" value="1"/>
</dbReference>
<dbReference type="PROSITE" id="PS00178">
    <property type="entry name" value="AA_TRNA_LIGASE_I"/>
    <property type="match status" value="1"/>
</dbReference>
<sequence length="467" mass="51649">MACRTRFAPSPTGYLHIGGARTALYCWLEARRRGGQFVLRIEDTDRQRSTQAAIDAILEAMQWLGLGYDEGPIYQTQRVARYQEVAEQLLAQGKAYYAYETREELDAMREAAMAKQEKPRYDGAAREQNLPYRDDPNRVIRFKNPIGGTVVFDDLIKGRIEIANSELDDMVIFRPDGLPTYNFAVVVDDWDMGITEVIRGDDHINNTPRQINIYAALGAPVPKFAHMPMILDEQGTKLSKRTGAADVMQYKDAGYLPHALINYLARLGWSHGDQELFTPQELLDLFDVKDVNSKAARLDMAKLGWVNQHYLKTDDPASIAPQLEYQLAKLGVDLAAGPAAADVVVALRERVHTLKEMAEKAVVWYQPLETYDAAAVMKHLKLGAEVPLGKARELLAAVDQWSVDSVSAALHDAAAALELGMGKVAQPLRVAITGTQVSPDISQTVYLAGREGALKRIDAALTKIGAA</sequence>
<proteinExistence type="inferred from homology"/>
<comment type="function">
    <text evidence="1">Catalyzes the attachment of glutamate to tRNA(Glu) in a two-step reaction: glutamate is first activated by ATP to form Glu-AMP and then transferred to the acceptor end of tRNA(Glu).</text>
</comment>
<comment type="catalytic activity">
    <reaction evidence="1">
        <text>tRNA(Glu) + L-glutamate + ATP = L-glutamyl-tRNA(Glu) + AMP + diphosphate</text>
        <dbReference type="Rhea" id="RHEA:23540"/>
        <dbReference type="Rhea" id="RHEA-COMP:9663"/>
        <dbReference type="Rhea" id="RHEA-COMP:9680"/>
        <dbReference type="ChEBI" id="CHEBI:29985"/>
        <dbReference type="ChEBI" id="CHEBI:30616"/>
        <dbReference type="ChEBI" id="CHEBI:33019"/>
        <dbReference type="ChEBI" id="CHEBI:78442"/>
        <dbReference type="ChEBI" id="CHEBI:78520"/>
        <dbReference type="ChEBI" id="CHEBI:456215"/>
        <dbReference type="EC" id="6.1.1.17"/>
    </reaction>
</comment>
<comment type="subunit">
    <text evidence="1">Monomer.</text>
</comment>
<comment type="subcellular location">
    <subcellularLocation>
        <location evidence="1">Cytoplasm</location>
    </subcellularLocation>
</comment>
<comment type="similarity">
    <text evidence="1">Belongs to the class-I aminoacyl-tRNA synthetase family. Glutamate--tRNA ligase type 1 subfamily.</text>
</comment>
<organism>
    <name type="scientific">Xanthomonas oryzae pv. oryzae (strain MAFF 311018)</name>
    <dbReference type="NCBI Taxonomy" id="342109"/>
    <lineage>
        <taxon>Bacteria</taxon>
        <taxon>Pseudomonadati</taxon>
        <taxon>Pseudomonadota</taxon>
        <taxon>Gammaproteobacteria</taxon>
        <taxon>Lysobacterales</taxon>
        <taxon>Lysobacteraceae</taxon>
        <taxon>Xanthomonas</taxon>
    </lineage>
</organism>
<feature type="chain" id="PRO_0000237421" description="Glutamate--tRNA ligase">
    <location>
        <begin position="1"/>
        <end position="467"/>
    </location>
</feature>
<feature type="short sequence motif" description="'HIGH' region" evidence="1">
    <location>
        <begin position="9"/>
        <end position="19"/>
    </location>
</feature>
<feature type="short sequence motif" description="'KMSKS' region" evidence="1">
    <location>
        <begin position="237"/>
        <end position="241"/>
    </location>
</feature>
<feature type="binding site" evidence="1">
    <location>
        <position position="240"/>
    </location>
    <ligand>
        <name>ATP</name>
        <dbReference type="ChEBI" id="CHEBI:30616"/>
    </ligand>
</feature>
<reference key="1">
    <citation type="journal article" date="2005" name="Jpn. Agric. Res. Q.">
        <title>Genome sequence of Xanthomonas oryzae pv. oryzae suggests contribution of large numbers of effector genes and insertion sequences to its race diversity.</title>
        <authorList>
            <person name="Ochiai H."/>
            <person name="Inoue Y."/>
            <person name="Takeya M."/>
            <person name="Sasaki A."/>
            <person name="Kaku H."/>
        </authorList>
    </citation>
    <scope>NUCLEOTIDE SEQUENCE [LARGE SCALE GENOMIC DNA]</scope>
    <source>
        <strain>MAFF 311018</strain>
    </source>
</reference>
<name>SYE_XANOM</name>
<keyword id="KW-0030">Aminoacyl-tRNA synthetase</keyword>
<keyword id="KW-0067">ATP-binding</keyword>
<keyword id="KW-0963">Cytoplasm</keyword>
<keyword id="KW-0436">Ligase</keyword>
<keyword id="KW-0547">Nucleotide-binding</keyword>
<keyword id="KW-0648">Protein biosynthesis</keyword>